<reference key="1">
    <citation type="submission" date="1996-05" db="EMBL/GenBank/DDBJ databases">
        <title>SpPrx-1, a sea urchin homeobox gene related to aristaless is expressed during embryogenesis.</title>
        <authorList>
            <person name="Martinez P."/>
            <person name="Davidson E.H."/>
        </authorList>
    </citation>
    <scope>NUCLEOTIDE SEQUENCE [MRNA]</scope>
</reference>
<accession>Q26657</accession>
<dbReference type="EMBL" id="D85080">
    <property type="protein sequence ID" value="BAA19774.1"/>
    <property type="molecule type" value="mRNA"/>
</dbReference>
<dbReference type="SMR" id="Q26657"/>
<dbReference type="FunCoup" id="Q26657">
    <property type="interactions" value="203"/>
</dbReference>
<dbReference type="STRING" id="7668.Q26657"/>
<dbReference type="eggNOG" id="KOG0490">
    <property type="taxonomic scope" value="Eukaryota"/>
</dbReference>
<dbReference type="HOGENOM" id="CLU_540067_0_0_1"/>
<dbReference type="InParanoid" id="Q26657"/>
<dbReference type="Proteomes" id="UP000007110">
    <property type="component" value="Unassembled WGS sequence"/>
</dbReference>
<dbReference type="GO" id="GO:0005634">
    <property type="term" value="C:nucleus"/>
    <property type="evidence" value="ECO:0007669"/>
    <property type="project" value="UniProtKB-SubCell"/>
</dbReference>
<dbReference type="GO" id="GO:0000981">
    <property type="term" value="F:DNA-binding transcription factor activity, RNA polymerase II-specific"/>
    <property type="evidence" value="ECO:0000318"/>
    <property type="project" value="GO_Central"/>
</dbReference>
<dbReference type="GO" id="GO:0000977">
    <property type="term" value="F:RNA polymerase II transcription regulatory region sequence-specific DNA binding"/>
    <property type="evidence" value="ECO:0000318"/>
    <property type="project" value="GO_Central"/>
</dbReference>
<dbReference type="GO" id="GO:0006357">
    <property type="term" value="P:regulation of transcription by RNA polymerase II"/>
    <property type="evidence" value="ECO:0000318"/>
    <property type="project" value="GO_Central"/>
</dbReference>
<dbReference type="CDD" id="cd00086">
    <property type="entry name" value="homeodomain"/>
    <property type="match status" value="1"/>
</dbReference>
<dbReference type="FunFam" id="1.10.10.60:FF:000102">
    <property type="entry name" value="Aristaless related homeobox"/>
    <property type="match status" value="1"/>
</dbReference>
<dbReference type="Gene3D" id="1.10.10.60">
    <property type="entry name" value="Homeodomain-like"/>
    <property type="match status" value="1"/>
</dbReference>
<dbReference type="InterPro" id="IPR001356">
    <property type="entry name" value="HD"/>
</dbReference>
<dbReference type="InterPro" id="IPR017970">
    <property type="entry name" value="Homeobox_CS"/>
</dbReference>
<dbReference type="InterPro" id="IPR009057">
    <property type="entry name" value="Homeodomain-like_sf"/>
</dbReference>
<dbReference type="InterPro" id="IPR050649">
    <property type="entry name" value="Paired_Homeobox_TFs"/>
</dbReference>
<dbReference type="PANTHER" id="PTHR24329:SF543">
    <property type="entry name" value="FI01017P-RELATED"/>
    <property type="match status" value="1"/>
</dbReference>
<dbReference type="PANTHER" id="PTHR24329">
    <property type="entry name" value="HOMEOBOX PROTEIN ARISTALESS"/>
    <property type="match status" value="1"/>
</dbReference>
<dbReference type="Pfam" id="PF00046">
    <property type="entry name" value="Homeodomain"/>
    <property type="match status" value="1"/>
</dbReference>
<dbReference type="SMART" id="SM00389">
    <property type="entry name" value="HOX"/>
    <property type="match status" value="1"/>
</dbReference>
<dbReference type="SUPFAM" id="SSF46689">
    <property type="entry name" value="Homeodomain-like"/>
    <property type="match status" value="1"/>
</dbReference>
<dbReference type="PROSITE" id="PS00027">
    <property type="entry name" value="HOMEOBOX_1"/>
    <property type="match status" value="1"/>
</dbReference>
<dbReference type="PROSITE" id="PS50071">
    <property type="entry name" value="HOMEOBOX_2"/>
    <property type="match status" value="1"/>
</dbReference>
<name>ALX_STRPU</name>
<proteinExistence type="evidence at transcript level"/>
<evidence type="ECO:0000255" key="1">
    <source>
        <dbReference type="PROSITE-ProRule" id="PRU00108"/>
    </source>
</evidence>
<evidence type="ECO:0000256" key="2">
    <source>
        <dbReference type="SAM" id="MobiDB-lite"/>
    </source>
</evidence>
<evidence type="ECO:0000305" key="3"/>
<protein>
    <recommendedName>
        <fullName>Aristaless homeobox protein</fullName>
        <shortName>ALX</shortName>
    </recommendedName>
    <alternativeName>
        <fullName>SpPrx-1</fullName>
    </alternativeName>
</protein>
<comment type="subcellular location">
    <subcellularLocation>
        <location evidence="1">Nucleus</location>
    </subcellularLocation>
</comment>
<comment type="similarity">
    <text evidence="3">Belongs to the paired homeobox family. Bicoid subfamily.</text>
</comment>
<gene>
    <name type="primary">ALX</name>
</gene>
<sequence length="327" mass="37147">MKRKFEAPQIAMDSAVCCTPRTMDADNRWNASVPSPERHREAGMVVRESNAFGAVAPATRGLAGMTGSVGKCNDMMMNSGSWVDVSRMTDARVKDNEQVFTSLIKTQVLDSSVEKKDKTERSIHIWRPALDGDEKETSKKDVDVEVSRAARIWRPNDPQPEAHSTTATTMTMGDQERNESSRYVDDFDSDGDDEHLDEHGSNAGDRPTKRKQRRYRTTFTSYQLEELERAFCKTHYPDVFTREELAMRVDLTEARVQVWFQNRRAKWRKREKLGLQPRLHPHPHFGPILGGPISDSNLVSSHLCRLACIDRAHRQGLLTSPPPPPFV</sequence>
<organism>
    <name type="scientific">Strongylocentrotus purpuratus</name>
    <name type="common">Purple sea urchin</name>
    <dbReference type="NCBI Taxonomy" id="7668"/>
    <lineage>
        <taxon>Eukaryota</taxon>
        <taxon>Metazoa</taxon>
        <taxon>Echinodermata</taxon>
        <taxon>Eleutherozoa</taxon>
        <taxon>Echinozoa</taxon>
        <taxon>Echinoidea</taxon>
        <taxon>Euechinoidea</taxon>
        <taxon>Echinacea</taxon>
        <taxon>Camarodonta</taxon>
        <taxon>Echinidea</taxon>
        <taxon>Strongylocentrotidae</taxon>
        <taxon>Strongylocentrotus</taxon>
    </lineage>
</organism>
<keyword id="KW-0217">Developmental protein</keyword>
<keyword id="KW-0238">DNA-binding</keyword>
<keyword id="KW-0371">Homeobox</keyword>
<keyword id="KW-0539">Nucleus</keyword>
<keyword id="KW-1185">Reference proteome</keyword>
<keyword id="KW-0804">Transcription</keyword>
<keyword id="KW-0805">Transcription regulation</keyword>
<feature type="chain" id="PRO_0000048816" description="Aristaless homeobox protein">
    <location>
        <begin position="1"/>
        <end position="327" status="greater than"/>
    </location>
</feature>
<feature type="DNA-binding region" description="Homeobox" evidence="1">
    <location>
        <begin position="212"/>
        <end position="271"/>
    </location>
</feature>
<feature type="region of interest" description="Disordered" evidence="2">
    <location>
        <begin position="152"/>
        <end position="214"/>
    </location>
</feature>
<feature type="compositionally biased region" description="Polar residues" evidence="2">
    <location>
        <begin position="162"/>
        <end position="172"/>
    </location>
</feature>
<feature type="compositionally biased region" description="Basic and acidic residues" evidence="2">
    <location>
        <begin position="174"/>
        <end position="185"/>
    </location>
</feature>
<feature type="compositionally biased region" description="Acidic residues" evidence="2">
    <location>
        <begin position="186"/>
        <end position="195"/>
    </location>
</feature>
<feature type="non-terminal residue">
    <location>
        <position position="327"/>
    </location>
</feature>